<gene>
    <name evidence="1" type="primary">rpoZ</name>
    <name type="ordered locus">LMHCC_0730</name>
</gene>
<proteinExistence type="inferred from homology"/>
<protein>
    <recommendedName>
        <fullName evidence="1">DNA-directed RNA polymerase subunit omega</fullName>
        <shortName evidence="1">RNAP omega subunit</shortName>
        <ecNumber evidence="1">2.7.7.6</ecNumber>
    </recommendedName>
    <alternativeName>
        <fullName evidence="1">RNA polymerase omega subunit</fullName>
    </alternativeName>
    <alternativeName>
        <fullName evidence="1">Transcriptase subunit omega</fullName>
    </alternativeName>
</protein>
<comment type="function">
    <text evidence="1">Promotes RNA polymerase assembly. Latches the N- and C-terminal regions of the beta' subunit thereby facilitating its interaction with the beta and alpha subunits.</text>
</comment>
<comment type="catalytic activity">
    <reaction evidence="1">
        <text>RNA(n) + a ribonucleoside 5'-triphosphate = RNA(n+1) + diphosphate</text>
        <dbReference type="Rhea" id="RHEA:21248"/>
        <dbReference type="Rhea" id="RHEA-COMP:14527"/>
        <dbReference type="Rhea" id="RHEA-COMP:17342"/>
        <dbReference type="ChEBI" id="CHEBI:33019"/>
        <dbReference type="ChEBI" id="CHEBI:61557"/>
        <dbReference type="ChEBI" id="CHEBI:140395"/>
        <dbReference type="EC" id="2.7.7.6"/>
    </reaction>
</comment>
<comment type="subunit">
    <text evidence="1">The RNAP catalytic core consists of 2 alpha, 1 beta, 1 beta' and 1 omega subunit. When a sigma factor is associated with the core the holoenzyme is formed, which can initiate transcription.</text>
</comment>
<comment type="similarity">
    <text evidence="1">Belongs to the RNA polymerase subunit omega family.</text>
</comment>
<organism>
    <name type="scientific">Listeria monocytogenes serotype 4a (strain HCC23)</name>
    <dbReference type="NCBI Taxonomy" id="552536"/>
    <lineage>
        <taxon>Bacteria</taxon>
        <taxon>Bacillati</taxon>
        <taxon>Bacillota</taxon>
        <taxon>Bacilli</taxon>
        <taxon>Bacillales</taxon>
        <taxon>Listeriaceae</taxon>
        <taxon>Listeria</taxon>
    </lineage>
</organism>
<accession>B8DDS6</accession>
<keyword id="KW-0240">DNA-directed RNA polymerase</keyword>
<keyword id="KW-0548">Nucleotidyltransferase</keyword>
<keyword id="KW-0804">Transcription</keyword>
<keyword id="KW-0808">Transferase</keyword>
<dbReference type="EC" id="2.7.7.6" evidence="1"/>
<dbReference type="EMBL" id="CP001175">
    <property type="protein sequence ID" value="ACK39085.1"/>
    <property type="molecule type" value="Genomic_DNA"/>
</dbReference>
<dbReference type="SMR" id="B8DDS6"/>
<dbReference type="KEGG" id="lmh:LMHCC_0730"/>
<dbReference type="HOGENOM" id="CLU_125406_6_0_9"/>
<dbReference type="GO" id="GO:0000428">
    <property type="term" value="C:DNA-directed RNA polymerase complex"/>
    <property type="evidence" value="ECO:0007669"/>
    <property type="project" value="UniProtKB-KW"/>
</dbReference>
<dbReference type="GO" id="GO:0003677">
    <property type="term" value="F:DNA binding"/>
    <property type="evidence" value="ECO:0007669"/>
    <property type="project" value="UniProtKB-UniRule"/>
</dbReference>
<dbReference type="GO" id="GO:0003899">
    <property type="term" value="F:DNA-directed RNA polymerase activity"/>
    <property type="evidence" value="ECO:0007669"/>
    <property type="project" value="UniProtKB-UniRule"/>
</dbReference>
<dbReference type="GO" id="GO:0006351">
    <property type="term" value="P:DNA-templated transcription"/>
    <property type="evidence" value="ECO:0007669"/>
    <property type="project" value="UniProtKB-UniRule"/>
</dbReference>
<dbReference type="Gene3D" id="3.90.940.10">
    <property type="match status" value="1"/>
</dbReference>
<dbReference type="HAMAP" id="MF_00366">
    <property type="entry name" value="RNApol_bact_RpoZ"/>
    <property type="match status" value="1"/>
</dbReference>
<dbReference type="InterPro" id="IPR003716">
    <property type="entry name" value="DNA-dir_RNA_pol_omega"/>
</dbReference>
<dbReference type="InterPro" id="IPR006110">
    <property type="entry name" value="Pol_omega/Rpo6/RPB6"/>
</dbReference>
<dbReference type="InterPro" id="IPR036161">
    <property type="entry name" value="RPB6/omega-like_sf"/>
</dbReference>
<dbReference type="NCBIfam" id="TIGR00690">
    <property type="entry name" value="rpoZ"/>
    <property type="match status" value="1"/>
</dbReference>
<dbReference type="PANTHER" id="PTHR34476">
    <property type="entry name" value="DNA-DIRECTED RNA POLYMERASE SUBUNIT OMEGA"/>
    <property type="match status" value="1"/>
</dbReference>
<dbReference type="PANTHER" id="PTHR34476:SF1">
    <property type="entry name" value="DNA-DIRECTED RNA POLYMERASE SUBUNIT OMEGA"/>
    <property type="match status" value="1"/>
</dbReference>
<dbReference type="Pfam" id="PF01192">
    <property type="entry name" value="RNA_pol_Rpb6"/>
    <property type="match status" value="1"/>
</dbReference>
<dbReference type="SMART" id="SM01409">
    <property type="entry name" value="RNA_pol_Rpb6"/>
    <property type="match status" value="1"/>
</dbReference>
<dbReference type="SUPFAM" id="SSF63562">
    <property type="entry name" value="RPB6/omega subunit-like"/>
    <property type="match status" value="1"/>
</dbReference>
<feature type="chain" id="PRO_1000194799" description="DNA-directed RNA polymerase subunit omega">
    <location>
        <begin position="1"/>
        <end position="67"/>
    </location>
</feature>
<name>RPOZ_LISMH</name>
<evidence type="ECO:0000255" key="1">
    <source>
        <dbReference type="HAMAP-Rule" id="MF_00366"/>
    </source>
</evidence>
<reference key="1">
    <citation type="journal article" date="2011" name="J. Bacteriol.">
        <title>Genome sequence of lineage III Listeria monocytogenes strain HCC23.</title>
        <authorList>
            <person name="Steele C.L."/>
            <person name="Donaldson J.R."/>
            <person name="Paul D."/>
            <person name="Banes M.M."/>
            <person name="Arick T."/>
            <person name="Bridges S.M."/>
            <person name="Lawrence M.L."/>
        </authorList>
    </citation>
    <scope>NUCLEOTIDE SEQUENCE [LARGE SCALE GENOMIC DNA]</scope>
    <source>
        <strain>HCC23</strain>
    </source>
</reference>
<sequence>MLYPSIDNLLLKIDSKYSLVTVAAKRARYMQLENDKGVLPSYQSDKFVGKALEEIHAGKLVLKNDDK</sequence>